<feature type="signal peptide" evidence="4">
    <location>
        <begin position="1"/>
        <end position="22"/>
    </location>
</feature>
<feature type="chain" id="PRO_0000016770" description="Vascular endothelial growth factor receptor 1">
    <location>
        <begin position="23"/>
        <end position="1336"/>
    </location>
</feature>
<feature type="topological domain" description="Extracellular" evidence="4">
    <location>
        <begin position="23"/>
        <end position="758"/>
    </location>
</feature>
<feature type="transmembrane region" description="Helical" evidence="4">
    <location>
        <begin position="759"/>
        <end position="780"/>
    </location>
</feature>
<feature type="topological domain" description="Cytoplasmic" evidence="4">
    <location>
        <begin position="781"/>
        <end position="1336"/>
    </location>
</feature>
<feature type="domain" description="Ig-like C2-type 1">
    <location>
        <begin position="32"/>
        <end position="121"/>
    </location>
</feature>
<feature type="domain" description="Ig-like C2-type 2">
    <location>
        <begin position="151"/>
        <end position="214"/>
    </location>
</feature>
<feature type="domain" description="Ig-like C2-type 3">
    <location>
        <begin position="230"/>
        <end position="327"/>
    </location>
</feature>
<feature type="domain" description="Ig-like C2-type 4">
    <location>
        <begin position="335"/>
        <end position="421"/>
    </location>
</feature>
<feature type="domain" description="Ig-like C2-type 5">
    <location>
        <begin position="429"/>
        <end position="549"/>
    </location>
</feature>
<feature type="domain" description="Ig-like C2-type 6">
    <location>
        <begin position="556"/>
        <end position="655"/>
    </location>
</feature>
<feature type="domain" description="Ig-like C2-type 7">
    <location>
        <begin position="661"/>
        <end position="747"/>
    </location>
</feature>
<feature type="domain" description="Protein kinase" evidence="6">
    <location>
        <begin position="827"/>
        <end position="1158"/>
    </location>
</feature>
<feature type="region of interest" description="Disordered" evidence="8">
    <location>
        <begin position="941"/>
        <end position="982"/>
    </location>
</feature>
<feature type="region of interest" description="Disordered" evidence="8">
    <location>
        <begin position="1304"/>
        <end position="1326"/>
    </location>
</feature>
<feature type="compositionally biased region" description="Basic and acidic residues" evidence="8">
    <location>
        <begin position="941"/>
        <end position="957"/>
    </location>
</feature>
<feature type="compositionally biased region" description="Low complexity" evidence="8">
    <location>
        <begin position="959"/>
        <end position="969"/>
    </location>
</feature>
<feature type="active site" description="Proton acceptor" evidence="6 7">
    <location>
        <position position="1022"/>
    </location>
</feature>
<feature type="binding site" evidence="6">
    <location>
        <begin position="833"/>
        <end position="841"/>
    </location>
    <ligand>
        <name>ATP</name>
        <dbReference type="ChEBI" id="CHEBI:30616"/>
    </ligand>
</feature>
<feature type="binding site" evidence="6">
    <location>
        <position position="861"/>
    </location>
    <ligand>
        <name>ATP</name>
        <dbReference type="ChEBI" id="CHEBI:30616"/>
    </ligand>
</feature>
<feature type="site" description="Cleavage; by PSEN1" evidence="1">
    <location>
        <begin position="767"/>
        <end position="768"/>
    </location>
</feature>
<feature type="modified residue" description="Phosphotyrosine; by autocatalysis" evidence="2">
    <location>
        <position position="914"/>
    </location>
</feature>
<feature type="modified residue" description="Phosphotyrosine; by autocatalysis" evidence="1">
    <location>
        <position position="1053"/>
    </location>
</feature>
<feature type="modified residue" description="Phosphotyrosine; by autocatalysis" evidence="2">
    <location>
        <position position="1169"/>
    </location>
</feature>
<feature type="modified residue" description="Phosphotyrosine; by autocatalysis" evidence="2">
    <location>
        <position position="1213"/>
    </location>
</feature>
<feature type="modified residue" description="Phosphotyrosine; by autocatalysis" evidence="2">
    <location>
        <position position="1242"/>
    </location>
</feature>
<feature type="modified residue" description="Phosphotyrosine; by autocatalysis" evidence="2">
    <location>
        <position position="1325"/>
    </location>
</feature>
<feature type="modified residue" description="Phosphotyrosine; by autocatalysis" evidence="2">
    <location>
        <position position="1331"/>
    </location>
</feature>
<feature type="glycosylation site" description="N-linked (GlcNAc...) asparagine" evidence="4">
    <location>
        <position position="100"/>
    </location>
</feature>
<feature type="glycosylation site" description="N-linked (GlcNAc...) asparagine" evidence="4">
    <location>
        <position position="164"/>
    </location>
</feature>
<feature type="glycosylation site" description="N-linked (GlcNAc...) asparagine" evidence="4">
    <location>
        <position position="196"/>
    </location>
</feature>
<feature type="glycosylation site" description="N-linked (GlcNAc...) asparagine" evidence="4">
    <location>
        <position position="251"/>
    </location>
</feature>
<feature type="glycosylation site" description="N-linked (GlcNAc...) asparagine" evidence="4">
    <location>
        <position position="323"/>
    </location>
</feature>
<feature type="glycosylation site" description="N-linked (GlcNAc...) asparagine" evidence="4">
    <location>
        <position position="417"/>
    </location>
</feature>
<feature type="glycosylation site" description="N-linked (GlcNAc...) asparagine" evidence="4">
    <location>
        <position position="474"/>
    </location>
</feature>
<feature type="glycosylation site" description="N-linked (GlcNAc...) asparagine" evidence="4">
    <location>
        <position position="516"/>
    </location>
</feature>
<feature type="glycosylation site" description="N-linked (GlcNAc...) asparagine" evidence="4">
    <location>
        <position position="597"/>
    </location>
</feature>
<feature type="glycosylation site" description="N-linked (GlcNAc...) asparagine" evidence="4">
    <location>
        <position position="625"/>
    </location>
</feature>
<feature type="glycosylation site" description="N-linked (GlcNAc...) asparagine" evidence="4">
    <location>
        <position position="666"/>
    </location>
</feature>
<feature type="glycosylation site" description="N-linked (GlcNAc...) asparagine" evidence="4">
    <location>
        <position position="713"/>
    </location>
</feature>
<feature type="disulfide bond" evidence="5">
    <location>
        <begin position="53"/>
        <end position="107"/>
    </location>
</feature>
<feature type="disulfide bond" evidence="5">
    <location>
        <begin position="158"/>
        <end position="207"/>
    </location>
</feature>
<feature type="disulfide bond" evidence="5">
    <location>
        <begin position="252"/>
        <end position="311"/>
    </location>
</feature>
<feature type="disulfide bond" evidence="5">
    <location>
        <begin position="454"/>
        <end position="535"/>
    </location>
</feature>
<feature type="disulfide bond" evidence="5">
    <location>
        <begin position="577"/>
        <end position="636"/>
    </location>
</feature>
<feature type="disulfide bond" evidence="5">
    <location>
        <begin position="682"/>
        <end position="731"/>
    </location>
</feature>
<protein>
    <recommendedName>
        <fullName>Vascular endothelial growth factor receptor 1</fullName>
        <shortName>VEGFR-1</shortName>
        <ecNumber>2.7.10.1</ecNumber>
    </recommendedName>
    <alternativeName>
        <fullName>Fms-like tyrosine kinase 1</fullName>
        <shortName>FLT-1</shortName>
    </alternativeName>
    <alternativeName>
        <fullName>Tyrosine-protein kinase receptor FLT</fullName>
    </alternativeName>
</protein>
<keyword id="KW-0037">Angiogenesis</keyword>
<keyword id="KW-0067">ATP-binding</keyword>
<keyword id="KW-1003">Cell membrane</keyword>
<keyword id="KW-0145">Chemotaxis</keyword>
<keyword id="KW-0217">Developmental protein</keyword>
<keyword id="KW-0221">Differentiation</keyword>
<keyword id="KW-1015">Disulfide bond</keyword>
<keyword id="KW-0967">Endosome</keyword>
<keyword id="KW-0325">Glycoprotein</keyword>
<keyword id="KW-0393">Immunoglobulin domain</keyword>
<keyword id="KW-0418">Kinase</keyword>
<keyword id="KW-0472">Membrane</keyword>
<keyword id="KW-0547">Nucleotide-binding</keyword>
<keyword id="KW-0597">Phosphoprotein</keyword>
<keyword id="KW-0675">Receptor</keyword>
<keyword id="KW-1185">Reference proteome</keyword>
<keyword id="KW-0677">Repeat</keyword>
<keyword id="KW-0732">Signal</keyword>
<keyword id="KW-0808">Transferase</keyword>
<keyword id="KW-0812">Transmembrane</keyword>
<keyword id="KW-1133">Transmembrane helix</keyword>
<keyword id="KW-0829">Tyrosine-protein kinase</keyword>
<keyword id="KW-0832">Ubl conjugation</keyword>
<comment type="function">
    <text evidence="2 3">Tyrosine-protein kinase that acts as a cell-surface receptor for VEGFA, VEGFB and PGF, and plays an essential role in the development of embryonic vasculature, the regulation of angiogenesis, cell survival, cell migration, macrophage function, chemotaxis, and cancer cell invasion. Acts as a positive regulator of postnatal retinal hyaloid vessel regression (By similarity). May play an essential role as a negative regulator of embryonic angiogenesis by inhibiting excessive proliferation of endothelial cells. Can promote endothelial cell proliferation, survival and angiogenesis in adulthood. Its function in promoting cell proliferation seems to be cell-type specific. Promotes PGF-mediated proliferation of endothelial cells, and proliferation of some types of cancer cells, but does not promote proliferation of normal fibroblasts. Has very high affinity for VEGFA and relatively low protein kinase activity; may function as a negative regulator of VEGFA signaling by limiting the amount of free VEGFA and preventing its binding to KDR. Modulates KDR signaling by forming heterodimers with KDR. Ligand binding leads to the activation of several signaling cascades. Activation of PLCG leads to the production of the cellular signaling molecules diacylglycerol and inositol 1,4,5-trisphosphate and the activation of protein kinase C. Mediates phosphorylation of PIK3R1, the regulatory subunit of phosphatidylinositol 3-kinase, leading to the activation of phosphatidylinositol kinase and the downstream signaling pathway. Mediates activation of MAPK1/ERK2, MAPK3/ERK1 and the MAP kinase signaling pathway, as well as of the AKT1 signaling pathway. Phosphorylates SRC, YES1 and PLCG, and may also phosphorylate CBL. Promotes phosphorylation of AKT1 and PTK2/FAK1 (By similarity).</text>
</comment>
<comment type="catalytic activity">
    <reaction evidence="7">
        <text>L-tyrosyl-[protein] + ATP = O-phospho-L-tyrosyl-[protein] + ADP + H(+)</text>
        <dbReference type="Rhea" id="RHEA:10596"/>
        <dbReference type="Rhea" id="RHEA-COMP:10136"/>
        <dbReference type="Rhea" id="RHEA-COMP:20101"/>
        <dbReference type="ChEBI" id="CHEBI:15378"/>
        <dbReference type="ChEBI" id="CHEBI:30616"/>
        <dbReference type="ChEBI" id="CHEBI:46858"/>
        <dbReference type="ChEBI" id="CHEBI:61978"/>
        <dbReference type="ChEBI" id="CHEBI:456216"/>
        <dbReference type="EC" id="2.7.10.1"/>
    </reaction>
</comment>
<comment type="activity regulation">
    <text evidence="1">Present in an inactive conformation in the absence of bound ligand. Binding of VEGFA, VEGFB or PGF leads to dimerization and activation by autophosphorylation on tyrosine residues (By similarity).</text>
</comment>
<comment type="subunit">
    <text evidence="1">Interacts with VEGFA, VEGFB and PGF. Monomer in the absence of bound VEGFA, VEGFB or PGF. Homodimer in the presence of bound VEGFA, VEGFB and PGF. Can also form a heterodimer with KDR. Interacts (tyrosine phosphorylated) with CBL, CRK, GRB2, NCK1, PIK3R1, PLCG, PSEN1 and PTPN11. Probably interacts with PTPRB. Interacts with RACK1. Identified in a complex with CBL and CD2AP (By similarity).</text>
</comment>
<comment type="subcellular location">
    <subcellularLocation>
        <location>Cell membrane</location>
        <topology>Single-pass type I membrane protein</topology>
    </subcellularLocation>
    <subcellularLocation>
        <location evidence="1">Endosome</location>
    </subcellularLocation>
    <text evidence="1">Autophosphorylation promotes ubiquitination and endocytosis.</text>
</comment>
<comment type="domain">
    <text evidence="1">The second and third Ig-like C2-type (immunoglobulin-like) domains are sufficient for VEGFA binding.</text>
</comment>
<comment type="PTM">
    <text evidence="1">N-glycosylated.</text>
</comment>
<comment type="PTM">
    <text evidence="1">Ubiquitinated after VEGFA-mediated autophosphorylation, leading to proteolytic degradation.</text>
</comment>
<comment type="PTM">
    <text evidence="1">Autophosphorylated on tyrosine residues upon ligand binding. Autophosphorylation occurs in trans, i.e. one subunit of the dimeric receptor phosphorylates tyrosine residues on the other subunit. Phosphorylation at Tyr-1169 is important for interaction with PLCG. Phosphorylation at Tyr-1213 is important for interaction with PIK3R1, PTPN11, GRB2, and PLCG. Phosphorylation at Tyr-1331 is important for endocytosis and for interaction with CBL, NCK1 and CRK. Is probably dephosphorylated by PTPRB (By similarity).</text>
</comment>
<comment type="similarity">
    <text evidence="6">Belongs to the protein kinase superfamily. Tyr protein kinase family. CSF-1/PDGF receptor subfamily.</text>
</comment>
<accession>P53767</accession>
<proteinExistence type="evidence at transcript level"/>
<sequence length="1336" mass="150250">MVSCWDTAVLPCALLGCLLLTGYCSGSKLKGPELSLKGTQHVMQAGQTLFLKCRGEAAHSWSLPTTVSQEDKKLSVTRSACGRNNRQFCSTLTLNMAQANHTGLYSCRYLPKSTSKEKKMESAIYIFVSDAGSPFIEMHSDIPKLVHMTEGRELIIPCRVTSPNITVTLKKFPFDALTPDGQRIAWDSRRGFIIANATYKEIGLLTCEATVNGHLYQTSYLTHRQTNTILDVQISPPSPVRFLRGQTLVLNCTVTTDLNTRVQMSWNYPGKATKRASIRQRIDQSNPHSNVFHSVLKINNVESRDKGLYTCRVKSGSSFRTFNTSVHVYEKGFISVKHRKQQVQETIAGKRSHRLSMKVKAFPSPEVVWLKDGVPATEKSARYSVHGYSLIIKDVTAEDAGDYTILLGIKQSKLFRNLTATLIVNVKPQIYEKSVSSLPSPPLYPLGSRQVLTCTVYGIPQPTIKWLWHPCHYNHSKERNDFCFGSEESFILDSSSNIGNRIEGITQRMMVIEGTNKTVSTLVVADSRTPGSYSCKAFNKIGTVERDIRFYVTDVPNGFHVSLEKIPTEGEDLKLSCVVSKFLYRDITWILLRTVNNRTMHHSISKQKMATTQDYSITLNLVIKNVSLEDSGTYACRARNIYTGEEILRKTEVLVRDLEAPLLLQNLSDHEVSISGSTTLDCQARGVPAPQITWFKNNHKIQQEPGIILGPGNSTLFIERVTEEDEGVYRCRATNQKGVVESSAYLTVQGTSDKSNLELITLTCTCVAATLFWLLLTLFIRKLKRSSSEVKTDYLSIIMDPDEVPLDEQCERLPYDASKWEFARERLKLGKSLGRGAFGKVVQASAFGIKKSPTCRTVAVKMLKEGATASEYKALMTELKILTHIGHHLNVVNLLGACTKQGGPLMVIVEYCKYGNLSNYLKSKRDFFCLNKDAALHMEPKKEKLEPDLEQDQKPRLDSVSSSESFTSSGFQEDKSVSDVEGGEDYSEISKQPLTMEDLISYSFQVARGMEFLSSRKCIHRDLAARNILLSENNVVKICDFGLARDIYKNPDYVRRGDTRLPLKWMAPESIFDKVYSTKSDVWSYGVLLWEIFSLGGSPYPGVQMDEDFCSRLKEGMRMRTPEYATPEIYQIMLDCWHKDPKERPRFAELVEKLGDLLQANVQQDGKDYIPLNAILTRNSGFTYSVPTFSEDFFKDGFTDPKFHSGSSDDVRYVNAFKFMSLERIKTFEELSPNATSMFEDYHLDTSSLLTSPLLKRFTWTETKPKASMKIDLRITSKSKEAGLSDLPGPSFCFSSCGHIRPVRQEDEDDPELGKESCCSPPPDYNSVVLYSSPPA</sequence>
<name>VGFR1_RAT</name>
<organism>
    <name type="scientific">Rattus norvegicus</name>
    <name type="common">Rat</name>
    <dbReference type="NCBI Taxonomy" id="10116"/>
    <lineage>
        <taxon>Eukaryota</taxon>
        <taxon>Metazoa</taxon>
        <taxon>Chordata</taxon>
        <taxon>Craniata</taxon>
        <taxon>Vertebrata</taxon>
        <taxon>Euteleostomi</taxon>
        <taxon>Mammalia</taxon>
        <taxon>Eutheria</taxon>
        <taxon>Euarchontoglires</taxon>
        <taxon>Glires</taxon>
        <taxon>Rodentia</taxon>
        <taxon>Myomorpha</taxon>
        <taxon>Muroidea</taxon>
        <taxon>Muridae</taxon>
        <taxon>Murinae</taxon>
        <taxon>Rattus</taxon>
    </lineage>
</organism>
<dbReference type="EC" id="2.7.10.1"/>
<dbReference type="EMBL" id="D28498">
    <property type="protein sequence ID" value="BAA05857.1"/>
    <property type="molecule type" value="mRNA"/>
</dbReference>
<dbReference type="PIR" id="I60598">
    <property type="entry name" value="I60598"/>
</dbReference>
<dbReference type="SMR" id="P53767"/>
<dbReference type="BioGRID" id="248474">
    <property type="interactions" value="1"/>
</dbReference>
<dbReference type="FunCoup" id="P53767">
    <property type="interactions" value="1622"/>
</dbReference>
<dbReference type="IntAct" id="P53767">
    <property type="interactions" value="1"/>
</dbReference>
<dbReference type="MINT" id="P53767"/>
<dbReference type="STRING" id="10116.ENSRNOP00000001248"/>
<dbReference type="GlyCosmos" id="P53767">
    <property type="glycosylation" value="12 sites, No reported glycans"/>
</dbReference>
<dbReference type="GlyGen" id="P53767">
    <property type="glycosylation" value="12 sites"/>
</dbReference>
<dbReference type="iPTMnet" id="P53767"/>
<dbReference type="PhosphoSitePlus" id="P53767"/>
<dbReference type="jPOST" id="P53767"/>
<dbReference type="PaxDb" id="10116-ENSRNOP00000001248"/>
<dbReference type="UCSC" id="RGD:2621">
    <property type="organism name" value="rat"/>
</dbReference>
<dbReference type="AGR" id="RGD:2621"/>
<dbReference type="RGD" id="2621">
    <property type="gene designation" value="Flt1"/>
</dbReference>
<dbReference type="eggNOG" id="KOG0200">
    <property type="taxonomic scope" value="Eukaryota"/>
</dbReference>
<dbReference type="InParanoid" id="P53767"/>
<dbReference type="PhylomeDB" id="P53767"/>
<dbReference type="BRENDA" id="2.7.10.1">
    <property type="organism ID" value="5301"/>
</dbReference>
<dbReference type="Reactome" id="R-RNO-194306">
    <property type="pathway name" value="Neurophilin interactions with VEGF and VEGFR"/>
</dbReference>
<dbReference type="Reactome" id="R-RNO-195399">
    <property type="pathway name" value="VEGF binds to VEGFR leading to receptor dimerization"/>
</dbReference>
<dbReference type="PRO" id="PR:P53767"/>
<dbReference type="Proteomes" id="UP000002494">
    <property type="component" value="Unplaced"/>
</dbReference>
<dbReference type="GO" id="GO:0005768">
    <property type="term" value="C:endosome"/>
    <property type="evidence" value="ECO:0007669"/>
    <property type="project" value="UniProtKB-SubCell"/>
</dbReference>
<dbReference type="GO" id="GO:0005615">
    <property type="term" value="C:extracellular space"/>
    <property type="evidence" value="ECO:0000314"/>
    <property type="project" value="RGD"/>
</dbReference>
<dbReference type="GO" id="GO:0005634">
    <property type="term" value="C:nucleus"/>
    <property type="evidence" value="ECO:0000266"/>
    <property type="project" value="RGD"/>
</dbReference>
<dbReference type="GO" id="GO:0005886">
    <property type="term" value="C:plasma membrane"/>
    <property type="evidence" value="ECO:0000250"/>
    <property type="project" value="UniProtKB"/>
</dbReference>
<dbReference type="GO" id="GO:0043235">
    <property type="term" value="C:receptor complex"/>
    <property type="evidence" value="ECO:0000266"/>
    <property type="project" value="RGD"/>
</dbReference>
<dbReference type="GO" id="GO:0005524">
    <property type="term" value="F:ATP binding"/>
    <property type="evidence" value="ECO:0000314"/>
    <property type="project" value="RGD"/>
</dbReference>
<dbReference type="GO" id="GO:0019838">
    <property type="term" value="F:growth factor binding"/>
    <property type="evidence" value="ECO:0000353"/>
    <property type="project" value="RGD"/>
</dbReference>
<dbReference type="GO" id="GO:0042802">
    <property type="term" value="F:identical protein binding"/>
    <property type="evidence" value="ECO:0000266"/>
    <property type="project" value="RGD"/>
</dbReference>
<dbReference type="GO" id="GO:0036332">
    <property type="term" value="F:placental growth factor receptor activity"/>
    <property type="evidence" value="ECO:0000266"/>
    <property type="project" value="RGD"/>
</dbReference>
<dbReference type="GO" id="GO:0004714">
    <property type="term" value="F:transmembrane receptor protein tyrosine kinase activity"/>
    <property type="evidence" value="ECO:0000314"/>
    <property type="project" value="RGD"/>
</dbReference>
<dbReference type="GO" id="GO:0005021">
    <property type="term" value="F:vascular endothelial growth factor receptor activity"/>
    <property type="evidence" value="ECO:0000315"/>
    <property type="project" value="RGD"/>
</dbReference>
<dbReference type="GO" id="GO:0001525">
    <property type="term" value="P:angiogenesis"/>
    <property type="evidence" value="ECO:0000266"/>
    <property type="project" value="RGD"/>
</dbReference>
<dbReference type="GO" id="GO:0048514">
    <property type="term" value="P:blood vessel morphogenesis"/>
    <property type="evidence" value="ECO:0000250"/>
    <property type="project" value="UniProtKB"/>
</dbReference>
<dbReference type="GO" id="GO:0001569">
    <property type="term" value="P:branching involved in blood vessel morphogenesis"/>
    <property type="evidence" value="ECO:0000266"/>
    <property type="project" value="RGD"/>
</dbReference>
<dbReference type="GO" id="GO:0030154">
    <property type="term" value="P:cell differentiation"/>
    <property type="evidence" value="ECO:0007669"/>
    <property type="project" value="UniProtKB-KW"/>
</dbReference>
<dbReference type="GO" id="GO:0016477">
    <property type="term" value="P:cell migration"/>
    <property type="evidence" value="ECO:0000250"/>
    <property type="project" value="UniProtKB"/>
</dbReference>
<dbReference type="GO" id="GO:0071456">
    <property type="term" value="P:cellular response to hypoxia"/>
    <property type="evidence" value="ECO:0000270"/>
    <property type="project" value="RGD"/>
</dbReference>
<dbReference type="GO" id="GO:0035924">
    <property type="term" value="P:cellular response to vascular endothelial growth factor stimulus"/>
    <property type="evidence" value="ECO:0000266"/>
    <property type="project" value="RGD"/>
</dbReference>
<dbReference type="GO" id="GO:0048598">
    <property type="term" value="P:embryonic morphogenesis"/>
    <property type="evidence" value="ECO:0000250"/>
    <property type="project" value="UniProtKB"/>
</dbReference>
<dbReference type="GO" id="GO:0007565">
    <property type="term" value="P:female pregnancy"/>
    <property type="evidence" value="ECO:0000270"/>
    <property type="project" value="RGD"/>
</dbReference>
<dbReference type="GO" id="GO:1990384">
    <property type="term" value="P:hyaloid vascular plexus regression"/>
    <property type="evidence" value="ECO:0000250"/>
    <property type="project" value="UniProtKB"/>
</dbReference>
<dbReference type="GO" id="GO:0030522">
    <property type="term" value="P:intracellular receptor signaling pathway"/>
    <property type="evidence" value="ECO:0000315"/>
    <property type="project" value="RGD"/>
</dbReference>
<dbReference type="GO" id="GO:0097421">
    <property type="term" value="P:liver regeneration"/>
    <property type="evidence" value="ECO:0000270"/>
    <property type="project" value="RGD"/>
</dbReference>
<dbReference type="GO" id="GO:0002548">
    <property type="term" value="P:monocyte chemotaxis"/>
    <property type="evidence" value="ECO:0000266"/>
    <property type="project" value="RGD"/>
</dbReference>
<dbReference type="GO" id="GO:1903671">
    <property type="term" value="P:negative regulation of sprouting angiogenesis"/>
    <property type="evidence" value="ECO:0000314"/>
    <property type="project" value="RGD"/>
</dbReference>
<dbReference type="GO" id="GO:1905563">
    <property type="term" value="P:negative regulation of vascular endothelial cell proliferation"/>
    <property type="evidence" value="ECO:0000266"/>
    <property type="project" value="RGD"/>
</dbReference>
<dbReference type="GO" id="GO:1904046">
    <property type="term" value="P:negative regulation of vascular endothelial growth factor production"/>
    <property type="evidence" value="ECO:0000314"/>
    <property type="project" value="RGD"/>
</dbReference>
<dbReference type="GO" id="GO:0018108">
    <property type="term" value="P:peptidyl-tyrosine phosphorylation"/>
    <property type="evidence" value="ECO:0000250"/>
    <property type="project" value="UniProtKB"/>
</dbReference>
<dbReference type="GO" id="GO:0045766">
    <property type="term" value="P:positive regulation of angiogenesis"/>
    <property type="evidence" value="ECO:0000266"/>
    <property type="project" value="RGD"/>
</dbReference>
<dbReference type="GO" id="GO:0030335">
    <property type="term" value="P:positive regulation of cell migration"/>
    <property type="evidence" value="ECO:0000315"/>
    <property type="project" value="RGD"/>
</dbReference>
<dbReference type="GO" id="GO:0008284">
    <property type="term" value="P:positive regulation of cell population proliferation"/>
    <property type="evidence" value="ECO:0000318"/>
    <property type="project" value="GO_Central"/>
</dbReference>
<dbReference type="GO" id="GO:0060252">
    <property type="term" value="P:positive regulation of glial cell proliferation"/>
    <property type="evidence" value="ECO:0000315"/>
    <property type="project" value="RGD"/>
</dbReference>
<dbReference type="GO" id="GO:1901534">
    <property type="term" value="P:positive regulation of hematopoietic progenitor cell differentiation"/>
    <property type="evidence" value="ECO:0000266"/>
    <property type="project" value="RGD"/>
</dbReference>
<dbReference type="GO" id="GO:0043410">
    <property type="term" value="P:positive regulation of MAPK cascade"/>
    <property type="evidence" value="ECO:0000315"/>
    <property type="project" value="RGD"/>
</dbReference>
<dbReference type="GO" id="GO:0051897">
    <property type="term" value="P:positive regulation of phosphatidylinositol 3-kinase/protein kinase B signal transduction"/>
    <property type="evidence" value="ECO:0000266"/>
    <property type="project" value="RGD"/>
</dbReference>
<dbReference type="GO" id="GO:0048661">
    <property type="term" value="P:positive regulation of smooth muscle cell proliferation"/>
    <property type="evidence" value="ECO:0000314"/>
    <property type="project" value="RGD"/>
</dbReference>
<dbReference type="GO" id="GO:0043117">
    <property type="term" value="P:positive regulation of vascular permeability"/>
    <property type="evidence" value="ECO:0000266"/>
    <property type="project" value="RGD"/>
</dbReference>
<dbReference type="GO" id="GO:0048597">
    <property type="term" value="P:post-embryonic camera-type eye morphogenesis"/>
    <property type="evidence" value="ECO:0000266"/>
    <property type="project" value="RGD"/>
</dbReference>
<dbReference type="GO" id="GO:0046777">
    <property type="term" value="P:protein autophosphorylation"/>
    <property type="evidence" value="ECO:0000250"/>
    <property type="project" value="UniProtKB"/>
</dbReference>
<dbReference type="GO" id="GO:0006940">
    <property type="term" value="P:regulation of smooth muscle contraction"/>
    <property type="evidence" value="ECO:0000314"/>
    <property type="project" value="RGD"/>
</dbReference>
<dbReference type="GO" id="GO:0014823">
    <property type="term" value="P:response to activity"/>
    <property type="evidence" value="ECO:0000270"/>
    <property type="project" value="RGD"/>
</dbReference>
<dbReference type="GO" id="GO:0032355">
    <property type="term" value="P:response to estradiol"/>
    <property type="evidence" value="ECO:0000270"/>
    <property type="project" value="RGD"/>
</dbReference>
<dbReference type="GO" id="GO:0045471">
    <property type="term" value="P:response to ethanol"/>
    <property type="evidence" value="ECO:0000270"/>
    <property type="project" value="RGD"/>
</dbReference>
<dbReference type="GO" id="GO:0001666">
    <property type="term" value="P:response to hypoxia"/>
    <property type="evidence" value="ECO:0000314"/>
    <property type="project" value="RGD"/>
</dbReference>
<dbReference type="GO" id="GO:0002040">
    <property type="term" value="P:sprouting angiogenesis"/>
    <property type="evidence" value="ECO:0000266"/>
    <property type="project" value="RGD"/>
</dbReference>
<dbReference type="GO" id="GO:0048010">
    <property type="term" value="P:vascular endothelial growth factor receptor signaling pathway"/>
    <property type="evidence" value="ECO:0000266"/>
    <property type="project" value="RGD"/>
</dbReference>
<dbReference type="GO" id="GO:0036323">
    <property type="term" value="P:vascular endothelial growth factor receptor-1 signaling pathway"/>
    <property type="evidence" value="ECO:0000266"/>
    <property type="project" value="RGD"/>
</dbReference>
<dbReference type="CDD" id="cd00096">
    <property type="entry name" value="Ig"/>
    <property type="match status" value="2"/>
</dbReference>
<dbReference type="FunFam" id="2.60.40.10:FF:000606">
    <property type="entry name" value="Vascular endothelial growth factor receptor 1"/>
    <property type="match status" value="1"/>
</dbReference>
<dbReference type="FunFam" id="2.60.40.10:FF:001031">
    <property type="entry name" value="Vascular endothelial growth factor receptor 1"/>
    <property type="match status" value="1"/>
</dbReference>
<dbReference type="FunFam" id="2.60.40.10:FF:001347">
    <property type="entry name" value="Vascular endothelial growth factor receptor 1"/>
    <property type="match status" value="1"/>
</dbReference>
<dbReference type="FunFam" id="2.60.40.10:FF:000934">
    <property type="entry name" value="vascular endothelial growth factor receptor 1"/>
    <property type="match status" value="1"/>
</dbReference>
<dbReference type="FunFam" id="2.60.40.10:FF:001014">
    <property type="entry name" value="vascular endothelial growth factor receptor 1"/>
    <property type="match status" value="1"/>
</dbReference>
<dbReference type="FunFam" id="2.60.40.10:FF:001245">
    <property type="entry name" value="vascular endothelial growth factor receptor 1"/>
    <property type="match status" value="1"/>
</dbReference>
<dbReference type="FunFam" id="1.10.510.10:FF:000077">
    <property type="entry name" value="Vascular endothelial growth factor receptor 2"/>
    <property type="match status" value="1"/>
</dbReference>
<dbReference type="FunFam" id="3.30.200.20:FF:000041">
    <property type="entry name" value="Vascular endothelial growth factor receptor 2"/>
    <property type="match status" value="1"/>
</dbReference>
<dbReference type="FunFam" id="2.60.40.10:FF:000143">
    <property type="entry name" value="Vascular endothelial growth factor receptor 3"/>
    <property type="match status" value="1"/>
</dbReference>
<dbReference type="Gene3D" id="2.60.40.10">
    <property type="entry name" value="Immunoglobulins"/>
    <property type="match status" value="7"/>
</dbReference>
<dbReference type="Gene3D" id="3.30.200.20">
    <property type="entry name" value="Phosphorylase Kinase, domain 1"/>
    <property type="match status" value="1"/>
</dbReference>
<dbReference type="Gene3D" id="1.10.510.10">
    <property type="entry name" value="Transferase(Phosphotransferase) domain 1"/>
    <property type="match status" value="1"/>
</dbReference>
<dbReference type="InterPro" id="IPR007110">
    <property type="entry name" value="Ig-like_dom"/>
</dbReference>
<dbReference type="InterPro" id="IPR036179">
    <property type="entry name" value="Ig-like_dom_sf"/>
</dbReference>
<dbReference type="InterPro" id="IPR013783">
    <property type="entry name" value="Ig-like_fold"/>
</dbReference>
<dbReference type="InterPro" id="IPR013098">
    <property type="entry name" value="Ig_I-set"/>
</dbReference>
<dbReference type="InterPro" id="IPR003599">
    <property type="entry name" value="Ig_sub"/>
</dbReference>
<dbReference type="InterPro" id="IPR003598">
    <property type="entry name" value="Ig_sub2"/>
</dbReference>
<dbReference type="InterPro" id="IPR011009">
    <property type="entry name" value="Kinase-like_dom_sf"/>
</dbReference>
<dbReference type="InterPro" id="IPR000719">
    <property type="entry name" value="Prot_kinase_dom"/>
</dbReference>
<dbReference type="InterPro" id="IPR017441">
    <property type="entry name" value="Protein_kinase_ATP_BS"/>
</dbReference>
<dbReference type="InterPro" id="IPR050122">
    <property type="entry name" value="RTK"/>
</dbReference>
<dbReference type="InterPro" id="IPR001245">
    <property type="entry name" value="Ser-Thr/Tyr_kinase_cat_dom"/>
</dbReference>
<dbReference type="InterPro" id="IPR008266">
    <property type="entry name" value="Tyr_kinase_AS"/>
</dbReference>
<dbReference type="InterPro" id="IPR020635">
    <property type="entry name" value="Tyr_kinase_cat_dom"/>
</dbReference>
<dbReference type="InterPro" id="IPR001824">
    <property type="entry name" value="Tyr_kinase_rcpt_3_CS"/>
</dbReference>
<dbReference type="InterPro" id="IPR041348">
    <property type="entry name" value="VEGFR-2_TMD"/>
</dbReference>
<dbReference type="InterPro" id="IPR055229">
    <property type="entry name" value="VEGFR1-3_5th"/>
</dbReference>
<dbReference type="InterPro" id="IPR055238">
    <property type="entry name" value="VEGFR1-3_N_Ig-like"/>
</dbReference>
<dbReference type="InterPro" id="IPR009135">
    <property type="entry name" value="VEGFR1_rcpt"/>
</dbReference>
<dbReference type="PANTHER" id="PTHR24416">
    <property type="entry name" value="TYROSINE-PROTEIN KINASE RECEPTOR"/>
    <property type="match status" value="1"/>
</dbReference>
<dbReference type="PANTHER" id="PTHR24416:SF390">
    <property type="entry name" value="VASCULAR ENDOTHELIAL GROWTH FACTOR RECEPTOR 1"/>
    <property type="match status" value="1"/>
</dbReference>
<dbReference type="Pfam" id="PF07679">
    <property type="entry name" value="I-set"/>
    <property type="match status" value="2"/>
</dbReference>
<dbReference type="Pfam" id="PF13927">
    <property type="entry name" value="Ig_3"/>
    <property type="match status" value="2"/>
</dbReference>
<dbReference type="Pfam" id="PF22971">
    <property type="entry name" value="Ig_VEGFR-1-like_5th"/>
    <property type="match status" value="1"/>
</dbReference>
<dbReference type="Pfam" id="PF07714">
    <property type="entry name" value="PK_Tyr_Ser-Thr"/>
    <property type="match status" value="1"/>
</dbReference>
<dbReference type="Pfam" id="PF21339">
    <property type="entry name" value="VEGFR-1-like_Ig-like"/>
    <property type="match status" value="1"/>
</dbReference>
<dbReference type="Pfam" id="PF17988">
    <property type="entry name" value="VEGFR-2_TMD"/>
    <property type="match status" value="1"/>
</dbReference>
<dbReference type="Pfam" id="PF22854">
    <property type="entry name" value="VEGFR1-3_N_Ig-like"/>
    <property type="match status" value="1"/>
</dbReference>
<dbReference type="PIRSF" id="PIRSF000615">
    <property type="entry name" value="TyrPK_CSF1-R"/>
    <property type="match status" value="1"/>
</dbReference>
<dbReference type="PRINTS" id="PR01832">
    <property type="entry name" value="VEGFRECEPTOR"/>
</dbReference>
<dbReference type="PRINTS" id="PR01833">
    <property type="entry name" value="VEGFRECEPTR1"/>
</dbReference>
<dbReference type="SMART" id="SM00409">
    <property type="entry name" value="IG"/>
    <property type="match status" value="7"/>
</dbReference>
<dbReference type="SMART" id="SM00408">
    <property type="entry name" value="IGc2"/>
    <property type="match status" value="5"/>
</dbReference>
<dbReference type="SMART" id="SM00219">
    <property type="entry name" value="TyrKc"/>
    <property type="match status" value="1"/>
</dbReference>
<dbReference type="SUPFAM" id="SSF48726">
    <property type="entry name" value="Immunoglobulin"/>
    <property type="match status" value="7"/>
</dbReference>
<dbReference type="SUPFAM" id="SSF56112">
    <property type="entry name" value="Protein kinase-like (PK-like)"/>
    <property type="match status" value="1"/>
</dbReference>
<dbReference type="PROSITE" id="PS50835">
    <property type="entry name" value="IG_LIKE"/>
    <property type="match status" value="6"/>
</dbReference>
<dbReference type="PROSITE" id="PS00107">
    <property type="entry name" value="PROTEIN_KINASE_ATP"/>
    <property type="match status" value="1"/>
</dbReference>
<dbReference type="PROSITE" id="PS50011">
    <property type="entry name" value="PROTEIN_KINASE_DOM"/>
    <property type="match status" value="1"/>
</dbReference>
<dbReference type="PROSITE" id="PS00109">
    <property type="entry name" value="PROTEIN_KINASE_TYR"/>
    <property type="match status" value="1"/>
</dbReference>
<dbReference type="PROSITE" id="PS00240">
    <property type="entry name" value="RECEPTOR_TYR_KIN_III"/>
    <property type="match status" value="1"/>
</dbReference>
<reference key="1">
    <citation type="journal article" date="1994" name="Oncogene">
        <title>A new communication system between hepatocytes and sinusoidal endothelial cells in liver through vascular endothelial growth factor and Flt tyrosine kinase receptor family (Flt-1 and KDR/Flk-1).</title>
        <authorList>
            <person name="Yamane A."/>
            <person name="Seetharam L."/>
            <person name="Yamaguchi S."/>
            <person name="Gotoh N."/>
            <person name="Takahashi T."/>
            <person name="Neufeld G."/>
            <person name="Shibuya M."/>
        </authorList>
    </citation>
    <scope>NUCLEOTIDE SEQUENCE [MRNA]</scope>
    <source>
        <strain>Fischer 344</strain>
        <tissue>Lung</tissue>
        <tissue>Testis</tissue>
    </source>
</reference>
<evidence type="ECO:0000250" key="1"/>
<evidence type="ECO:0000250" key="2">
    <source>
        <dbReference type="UniProtKB" id="P17948"/>
    </source>
</evidence>
<evidence type="ECO:0000250" key="3">
    <source>
        <dbReference type="UniProtKB" id="P35969"/>
    </source>
</evidence>
<evidence type="ECO:0000255" key="4"/>
<evidence type="ECO:0000255" key="5">
    <source>
        <dbReference type="PROSITE-ProRule" id="PRU00114"/>
    </source>
</evidence>
<evidence type="ECO:0000255" key="6">
    <source>
        <dbReference type="PROSITE-ProRule" id="PRU00159"/>
    </source>
</evidence>
<evidence type="ECO:0000255" key="7">
    <source>
        <dbReference type="PROSITE-ProRule" id="PRU10028"/>
    </source>
</evidence>
<evidence type="ECO:0000256" key="8">
    <source>
        <dbReference type="SAM" id="MobiDB-lite"/>
    </source>
</evidence>
<gene>
    <name type="primary">Flt1</name>
    <name type="synonym">Flt-1</name>
    <name type="synonym">Vegfr1</name>
</gene>